<sequence length="31" mass="3406">MSILINYFLLVGFCFALASGLFLGLKSIKLI</sequence>
<name>PETL_THAPS</name>
<protein>
    <recommendedName>
        <fullName evidence="1">Cytochrome b6-f complex subunit 6</fullName>
    </recommendedName>
    <alternativeName>
        <fullName evidence="1">Cytochrome b6-f complex subunit PetL</fullName>
    </alternativeName>
    <alternativeName>
        <fullName evidence="1">Cytochrome b6-f complex subunit VI</fullName>
    </alternativeName>
</protein>
<comment type="function">
    <text evidence="1">Component of the cytochrome b6-f complex, which mediates electron transfer between photosystem II (PSII) and photosystem I (PSI), cyclic electron flow around PSI, and state transitions. PetL is important for photoautotrophic growth as well as for electron transfer efficiency and stability of the cytochrome b6-f complex.</text>
</comment>
<comment type="subunit">
    <text evidence="1">The 4 large subunits of the cytochrome b6-f complex are cytochrome b6, subunit IV (17 kDa polypeptide, PetD), cytochrome f and the Rieske protein, while the 4 small subunits are PetG, PetL, PetM and PetN. The complex functions as a dimer.</text>
</comment>
<comment type="subcellular location">
    <subcellularLocation>
        <location evidence="1">Plastid</location>
        <location evidence="1">Chloroplast thylakoid membrane</location>
        <topology evidence="1">Single-pass membrane protein</topology>
    </subcellularLocation>
</comment>
<comment type="similarity">
    <text evidence="1">Belongs to the PetL family.</text>
</comment>
<accession>A0T0U4</accession>
<keyword id="KW-0150">Chloroplast</keyword>
<keyword id="KW-0249">Electron transport</keyword>
<keyword id="KW-0472">Membrane</keyword>
<keyword id="KW-0602">Photosynthesis</keyword>
<keyword id="KW-0934">Plastid</keyword>
<keyword id="KW-0793">Thylakoid</keyword>
<keyword id="KW-0812">Transmembrane</keyword>
<keyword id="KW-1133">Transmembrane helix</keyword>
<keyword id="KW-0813">Transport</keyword>
<geneLocation type="chloroplast"/>
<proteinExistence type="inferred from homology"/>
<evidence type="ECO:0000255" key="1">
    <source>
        <dbReference type="HAMAP-Rule" id="MF_00433"/>
    </source>
</evidence>
<organism>
    <name type="scientific">Thalassiosira pseudonana</name>
    <name type="common">Marine diatom</name>
    <name type="synonym">Cyclotella nana</name>
    <dbReference type="NCBI Taxonomy" id="35128"/>
    <lineage>
        <taxon>Eukaryota</taxon>
        <taxon>Sar</taxon>
        <taxon>Stramenopiles</taxon>
        <taxon>Ochrophyta</taxon>
        <taxon>Bacillariophyta</taxon>
        <taxon>Coscinodiscophyceae</taxon>
        <taxon>Thalassiosirophycidae</taxon>
        <taxon>Thalassiosirales</taxon>
        <taxon>Thalassiosiraceae</taxon>
        <taxon>Thalassiosira</taxon>
    </lineage>
</organism>
<gene>
    <name evidence="1" type="primary">petL</name>
</gene>
<dbReference type="EMBL" id="EF067921">
    <property type="protein sequence ID" value="ABK20779.1"/>
    <property type="molecule type" value="Genomic_DNA"/>
</dbReference>
<dbReference type="RefSeq" id="YP_874556.1">
    <property type="nucleotide sequence ID" value="NC_008589.1"/>
</dbReference>
<dbReference type="SMR" id="A0T0U4"/>
<dbReference type="STRING" id="35128.A0T0U4"/>
<dbReference type="GeneID" id="4524866"/>
<dbReference type="InParanoid" id="A0T0U4"/>
<dbReference type="GO" id="GO:0009535">
    <property type="term" value="C:chloroplast thylakoid membrane"/>
    <property type="evidence" value="ECO:0007669"/>
    <property type="project" value="UniProtKB-SubCell"/>
</dbReference>
<dbReference type="GO" id="GO:0009512">
    <property type="term" value="C:cytochrome b6f complex"/>
    <property type="evidence" value="ECO:0007669"/>
    <property type="project" value="InterPro"/>
</dbReference>
<dbReference type="GO" id="GO:0045158">
    <property type="term" value="F:electron transporter, transferring electrons within cytochrome b6/f complex of photosystem II activity"/>
    <property type="evidence" value="ECO:0007669"/>
    <property type="project" value="UniProtKB-UniRule"/>
</dbReference>
<dbReference type="GO" id="GO:0015979">
    <property type="term" value="P:photosynthesis"/>
    <property type="evidence" value="ECO:0007669"/>
    <property type="project" value="UniProtKB-KW"/>
</dbReference>
<dbReference type="HAMAP" id="MF_00433">
    <property type="entry name" value="Cytb6_f_PetL"/>
    <property type="match status" value="1"/>
</dbReference>
<dbReference type="InterPro" id="IPR007802">
    <property type="entry name" value="Cyt_b6/f_cplx_su6"/>
</dbReference>
<dbReference type="Pfam" id="PF05115">
    <property type="entry name" value="PetL"/>
    <property type="match status" value="1"/>
</dbReference>
<feature type="chain" id="PRO_0000275541" description="Cytochrome b6-f complex subunit 6">
    <location>
        <begin position="1"/>
        <end position="31"/>
    </location>
</feature>
<feature type="transmembrane region" description="Helical" evidence="1">
    <location>
        <begin position="3"/>
        <end position="23"/>
    </location>
</feature>
<reference key="1">
    <citation type="journal article" date="2007" name="Mol. Genet. Genomics">
        <title>Chloroplast genomes of the diatoms Phaeodactylum tricornutum and Thalassiosira pseudonana: comparison with other plastid genomes of the red lineage.</title>
        <authorList>
            <person name="Oudot-Le Secq M.-P."/>
            <person name="Grimwood J."/>
            <person name="Shapiro H."/>
            <person name="Armbrust E.V."/>
            <person name="Bowler C."/>
            <person name="Green B.R."/>
        </authorList>
    </citation>
    <scope>NUCLEOTIDE SEQUENCE [LARGE SCALE GENOMIC DNA]</scope>
    <source>
        <strain>CCMP1335 / NEPCC58 / CCAP 1085/12</strain>
    </source>
</reference>